<sequence>MNNVFEIINQARRKNKLKRELQDNQKKIRDNQKRVTLLENMLDYIHPTMTTAEVIAVVENMKADYEDRVDDHIIKSAEISKSRRDISRKIRELTEADKKANK</sequence>
<gene>
    <name evidence="1" type="primary">tmaR</name>
    <name type="ordered locus">VF_A0606</name>
</gene>
<organism>
    <name type="scientific">Aliivibrio fischeri (strain ATCC 700601 / ES114)</name>
    <name type="common">Vibrio fischeri</name>
    <dbReference type="NCBI Taxonomy" id="312309"/>
    <lineage>
        <taxon>Bacteria</taxon>
        <taxon>Pseudomonadati</taxon>
        <taxon>Pseudomonadota</taxon>
        <taxon>Gammaproteobacteria</taxon>
        <taxon>Vibrionales</taxon>
        <taxon>Vibrionaceae</taxon>
        <taxon>Aliivibrio</taxon>
    </lineage>
</organism>
<proteinExistence type="inferred from homology"/>
<keyword id="KW-0175">Coiled coil</keyword>
<keyword id="KW-0963">Cytoplasm</keyword>
<keyword id="KW-1185">Reference proteome</keyword>
<dbReference type="EMBL" id="CP000021">
    <property type="protein sequence ID" value="AAW87676.1"/>
    <property type="molecule type" value="Genomic_DNA"/>
</dbReference>
<dbReference type="RefSeq" id="WP_005422781.1">
    <property type="nucleotide sequence ID" value="NZ_CAWLES010000002.1"/>
</dbReference>
<dbReference type="RefSeq" id="YP_206564.1">
    <property type="nucleotide sequence ID" value="NC_006841.2"/>
</dbReference>
<dbReference type="SMR" id="Q5DZX0"/>
<dbReference type="STRING" id="312309.VF_A0606"/>
<dbReference type="DNASU" id="3280551"/>
<dbReference type="EnsemblBacteria" id="AAW87676">
    <property type="protein sequence ID" value="AAW87676"/>
    <property type="gene ID" value="VF_A0606"/>
</dbReference>
<dbReference type="GeneID" id="54165930"/>
<dbReference type="KEGG" id="vfi:VF_A0606"/>
<dbReference type="PATRIC" id="fig|312309.11.peg.3211"/>
<dbReference type="eggNOG" id="COG2926">
    <property type="taxonomic scope" value="Bacteria"/>
</dbReference>
<dbReference type="HOGENOM" id="CLU_153146_0_0_6"/>
<dbReference type="OrthoDB" id="90485at2"/>
<dbReference type="Proteomes" id="UP000000537">
    <property type="component" value="Chromosome II"/>
</dbReference>
<dbReference type="GO" id="GO:0005829">
    <property type="term" value="C:cytosol"/>
    <property type="evidence" value="ECO:0007669"/>
    <property type="project" value="TreeGrafter"/>
</dbReference>
<dbReference type="HAMAP" id="MF_00683">
    <property type="entry name" value="Pole_loc_TmaR"/>
    <property type="match status" value="1"/>
</dbReference>
<dbReference type="InterPro" id="IPR007458">
    <property type="entry name" value="DUF496"/>
</dbReference>
<dbReference type="NCBIfam" id="NF003844">
    <property type="entry name" value="PRK05423.1"/>
    <property type="match status" value="1"/>
</dbReference>
<dbReference type="PANTHER" id="PTHR39591">
    <property type="entry name" value="UPF0265 PROTEIN YEEX"/>
    <property type="match status" value="1"/>
</dbReference>
<dbReference type="PANTHER" id="PTHR39591:SF1">
    <property type="entry name" value="UPF0265 PROTEIN YEEX"/>
    <property type="match status" value="1"/>
</dbReference>
<dbReference type="Pfam" id="PF04363">
    <property type="entry name" value="DUF496"/>
    <property type="match status" value="1"/>
</dbReference>
<dbReference type="PIRSF" id="PIRSF028773">
    <property type="entry name" value="UCP028773"/>
    <property type="match status" value="1"/>
</dbReference>
<accession>Q5DZX0</accession>
<evidence type="ECO:0000255" key="1">
    <source>
        <dbReference type="HAMAP-Rule" id="MF_00683"/>
    </source>
</evidence>
<name>TMAR_ALIF1</name>
<comment type="function">
    <text evidence="1">Pole-localizer protein involved in the regulation of several cellular processes.</text>
</comment>
<comment type="subcellular location">
    <subcellularLocation>
        <location evidence="1">Cytoplasm</location>
    </subcellularLocation>
</comment>
<comment type="similarity">
    <text evidence="1">Belongs to the pole-localizer TmaR family.</text>
</comment>
<feature type="chain" id="PRO_1000147745" description="Pole-localizer protein TmaR">
    <location>
        <begin position="1"/>
        <end position="102"/>
    </location>
</feature>
<feature type="coiled-coil region" evidence="1">
    <location>
        <begin position="7"/>
        <end position="34"/>
    </location>
</feature>
<protein>
    <recommendedName>
        <fullName evidence="1">Pole-localizer protein TmaR</fullName>
    </recommendedName>
</protein>
<reference key="1">
    <citation type="journal article" date="2005" name="Proc. Natl. Acad. Sci. U.S.A.">
        <title>Complete genome sequence of Vibrio fischeri: a symbiotic bacterium with pathogenic congeners.</title>
        <authorList>
            <person name="Ruby E.G."/>
            <person name="Urbanowski M."/>
            <person name="Campbell J."/>
            <person name="Dunn A."/>
            <person name="Faini M."/>
            <person name="Gunsalus R."/>
            <person name="Lostroh P."/>
            <person name="Lupp C."/>
            <person name="McCann J."/>
            <person name="Millikan D."/>
            <person name="Schaefer A."/>
            <person name="Stabb E."/>
            <person name="Stevens A."/>
            <person name="Visick K."/>
            <person name="Whistler C."/>
            <person name="Greenberg E.P."/>
        </authorList>
    </citation>
    <scope>NUCLEOTIDE SEQUENCE [LARGE SCALE GENOMIC DNA]</scope>
    <source>
        <strain>ATCC 700601 / ES114</strain>
    </source>
</reference>